<protein>
    <recommendedName>
        <fullName evidence="1">Holliday junction branch migration complex subunit RuvA</fullName>
    </recommendedName>
</protein>
<feature type="chain" id="PRO_1000090326" description="Holliday junction branch migration complex subunit RuvA">
    <location>
        <begin position="1"/>
        <end position="203"/>
    </location>
</feature>
<feature type="region of interest" description="Domain I" evidence="1">
    <location>
        <begin position="1"/>
        <end position="64"/>
    </location>
</feature>
<feature type="region of interest" description="Domain II" evidence="1">
    <location>
        <begin position="65"/>
        <end position="142"/>
    </location>
</feature>
<feature type="region of interest" description="Flexible linker" evidence="1">
    <location>
        <begin position="143"/>
        <end position="154"/>
    </location>
</feature>
<feature type="region of interest" description="Domain III" evidence="1">
    <location>
        <begin position="155"/>
        <end position="203"/>
    </location>
</feature>
<evidence type="ECO:0000255" key="1">
    <source>
        <dbReference type="HAMAP-Rule" id="MF_00031"/>
    </source>
</evidence>
<comment type="function">
    <text evidence="1">The RuvA-RuvB-RuvC complex processes Holliday junction (HJ) DNA during genetic recombination and DNA repair, while the RuvA-RuvB complex plays an important role in the rescue of blocked DNA replication forks via replication fork reversal (RFR). RuvA specifically binds to HJ cruciform DNA, conferring on it an open structure. The RuvB hexamer acts as an ATP-dependent pump, pulling dsDNA into and through the RuvAB complex. HJ branch migration allows RuvC to scan DNA until it finds its consensus sequence, where it cleaves and resolves the cruciform DNA.</text>
</comment>
<comment type="subunit">
    <text evidence="1">Homotetramer. Forms an RuvA(8)-RuvB(12)-Holliday junction (HJ) complex. HJ DNA is sandwiched between 2 RuvA tetramers; dsDNA enters through RuvA and exits via RuvB. An RuvB hexamer assembles on each DNA strand where it exits the tetramer. Each RuvB hexamer is contacted by two RuvA subunits (via domain III) on 2 adjacent RuvB subunits; this complex drives branch migration. In the full resolvosome a probable DNA-RuvA(4)-RuvB(12)-RuvC(2) complex forms which resolves the HJ.</text>
</comment>
<comment type="subcellular location">
    <subcellularLocation>
        <location evidence="1">Cytoplasm</location>
    </subcellularLocation>
</comment>
<comment type="domain">
    <text evidence="1">Has three domains with a flexible linker between the domains II and III and assumes an 'L' shape. Domain III is highly mobile and contacts RuvB.</text>
</comment>
<comment type="similarity">
    <text evidence="1">Belongs to the RuvA family.</text>
</comment>
<proteinExistence type="inferred from homology"/>
<organism>
    <name type="scientific">Klebsiella pneumoniae (strain 342)</name>
    <dbReference type="NCBI Taxonomy" id="507522"/>
    <lineage>
        <taxon>Bacteria</taxon>
        <taxon>Pseudomonadati</taxon>
        <taxon>Pseudomonadota</taxon>
        <taxon>Gammaproteobacteria</taxon>
        <taxon>Enterobacterales</taxon>
        <taxon>Enterobacteriaceae</taxon>
        <taxon>Klebsiella/Raoultella group</taxon>
        <taxon>Klebsiella</taxon>
        <taxon>Klebsiella pneumoniae complex</taxon>
    </lineage>
</organism>
<dbReference type="EMBL" id="CP000964">
    <property type="protein sequence ID" value="ACI11157.1"/>
    <property type="molecule type" value="Genomic_DNA"/>
</dbReference>
<dbReference type="SMR" id="B5XQ04"/>
<dbReference type="KEGG" id="kpe:KPK_1908"/>
<dbReference type="HOGENOM" id="CLU_087936_0_0_6"/>
<dbReference type="Proteomes" id="UP000001734">
    <property type="component" value="Chromosome"/>
</dbReference>
<dbReference type="GO" id="GO:0005737">
    <property type="term" value="C:cytoplasm"/>
    <property type="evidence" value="ECO:0007669"/>
    <property type="project" value="UniProtKB-SubCell"/>
</dbReference>
<dbReference type="GO" id="GO:0009379">
    <property type="term" value="C:Holliday junction helicase complex"/>
    <property type="evidence" value="ECO:0007669"/>
    <property type="project" value="InterPro"/>
</dbReference>
<dbReference type="GO" id="GO:0048476">
    <property type="term" value="C:Holliday junction resolvase complex"/>
    <property type="evidence" value="ECO:0007669"/>
    <property type="project" value="UniProtKB-UniRule"/>
</dbReference>
<dbReference type="GO" id="GO:0005524">
    <property type="term" value="F:ATP binding"/>
    <property type="evidence" value="ECO:0007669"/>
    <property type="project" value="InterPro"/>
</dbReference>
<dbReference type="GO" id="GO:0000400">
    <property type="term" value="F:four-way junction DNA binding"/>
    <property type="evidence" value="ECO:0007669"/>
    <property type="project" value="UniProtKB-UniRule"/>
</dbReference>
<dbReference type="GO" id="GO:0009378">
    <property type="term" value="F:four-way junction helicase activity"/>
    <property type="evidence" value="ECO:0007669"/>
    <property type="project" value="InterPro"/>
</dbReference>
<dbReference type="GO" id="GO:0006310">
    <property type="term" value="P:DNA recombination"/>
    <property type="evidence" value="ECO:0007669"/>
    <property type="project" value="UniProtKB-UniRule"/>
</dbReference>
<dbReference type="GO" id="GO:0006281">
    <property type="term" value="P:DNA repair"/>
    <property type="evidence" value="ECO:0007669"/>
    <property type="project" value="UniProtKB-UniRule"/>
</dbReference>
<dbReference type="CDD" id="cd14332">
    <property type="entry name" value="UBA_RuvA_C"/>
    <property type="match status" value="1"/>
</dbReference>
<dbReference type="FunFam" id="1.10.150.20:FF:000012">
    <property type="entry name" value="Holliday junction ATP-dependent DNA helicase RuvA"/>
    <property type="match status" value="1"/>
</dbReference>
<dbReference type="FunFam" id="1.10.8.10:FF:000008">
    <property type="entry name" value="Holliday junction ATP-dependent DNA helicase RuvA"/>
    <property type="match status" value="1"/>
</dbReference>
<dbReference type="FunFam" id="2.40.50.140:FF:000083">
    <property type="entry name" value="Holliday junction ATP-dependent DNA helicase RuvA"/>
    <property type="match status" value="1"/>
</dbReference>
<dbReference type="Gene3D" id="1.10.150.20">
    <property type="entry name" value="5' to 3' exonuclease, C-terminal subdomain"/>
    <property type="match status" value="1"/>
</dbReference>
<dbReference type="Gene3D" id="1.10.8.10">
    <property type="entry name" value="DNA helicase RuvA subunit, C-terminal domain"/>
    <property type="match status" value="1"/>
</dbReference>
<dbReference type="Gene3D" id="2.40.50.140">
    <property type="entry name" value="Nucleic acid-binding proteins"/>
    <property type="match status" value="1"/>
</dbReference>
<dbReference type="HAMAP" id="MF_00031">
    <property type="entry name" value="DNA_HJ_migration_RuvA"/>
    <property type="match status" value="1"/>
</dbReference>
<dbReference type="InterPro" id="IPR013849">
    <property type="entry name" value="DNA_helicase_Holl-junc_RuvA_I"/>
</dbReference>
<dbReference type="InterPro" id="IPR003583">
    <property type="entry name" value="Hlx-hairpin-Hlx_DNA-bd_motif"/>
</dbReference>
<dbReference type="InterPro" id="IPR012340">
    <property type="entry name" value="NA-bd_OB-fold"/>
</dbReference>
<dbReference type="InterPro" id="IPR000085">
    <property type="entry name" value="RuvA"/>
</dbReference>
<dbReference type="InterPro" id="IPR010994">
    <property type="entry name" value="RuvA_2-like"/>
</dbReference>
<dbReference type="InterPro" id="IPR011114">
    <property type="entry name" value="RuvA_C"/>
</dbReference>
<dbReference type="InterPro" id="IPR036267">
    <property type="entry name" value="RuvA_C_sf"/>
</dbReference>
<dbReference type="NCBIfam" id="TIGR00084">
    <property type="entry name" value="ruvA"/>
    <property type="match status" value="1"/>
</dbReference>
<dbReference type="Pfam" id="PF14520">
    <property type="entry name" value="HHH_5"/>
    <property type="match status" value="1"/>
</dbReference>
<dbReference type="Pfam" id="PF07499">
    <property type="entry name" value="RuvA_C"/>
    <property type="match status" value="1"/>
</dbReference>
<dbReference type="Pfam" id="PF01330">
    <property type="entry name" value="RuvA_N"/>
    <property type="match status" value="1"/>
</dbReference>
<dbReference type="SMART" id="SM00278">
    <property type="entry name" value="HhH1"/>
    <property type="match status" value="2"/>
</dbReference>
<dbReference type="SUPFAM" id="SSF46929">
    <property type="entry name" value="DNA helicase RuvA subunit, C-terminal domain"/>
    <property type="match status" value="1"/>
</dbReference>
<dbReference type="SUPFAM" id="SSF50249">
    <property type="entry name" value="Nucleic acid-binding proteins"/>
    <property type="match status" value="1"/>
</dbReference>
<dbReference type="SUPFAM" id="SSF47781">
    <property type="entry name" value="RuvA domain 2-like"/>
    <property type="match status" value="1"/>
</dbReference>
<reference key="1">
    <citation type="journal article" date="2008" name="PLoS Genet.">
        <title>Complete genome sequence of the N2-fixing broad host range endophyte Klebsiella pneumoniae 342 and virulence predictions verified in mice.</title>
        <authorList>
            <person name="Fouts D.E."/>
            <person name="Tyler H.L."/>
            <person name="DeBoy R.T."/>
            <person name="Daugherty S."/>
            <person name="Ren Q."/>
            <person name="Badger J.H."/>
            <person name="Durkin A.S."/>
            <person name="Huot H."/>
            <person name="Shrivastava S."/>
            <person name="Kothari S."/>
            <person name="Dodson R.J."/>
            <person name="Mohamoud Y."/>
            <person name="Khouri H."/>
            <person name="Roesch L.F.W."/>
            <person name="Krogfelt K.A."/>
            <person name="Struve C."/>
            <person name="Triplett E.W."/>
            <person name="Methe B.A."/>
        </authorList>
    </citation>
    <scope>NUCLEOTIDE SEQUENCE [LARGE SCALE GENOMIC DNA]</scope>
    <source>
        <strain>342</strain>
    </source>
</reference>
<gene>
    <name evidence="1" type="primary">ruvA</name>
    <name type="ordered locus">KPK_1908</name>
</gene>
<keyword id="KW-0963">Cytoplasm</keyword>
<keyword id="KW-0227">DNA damage</keyword>
<keyword id="KW-0233">DNA recombination</keyword>
<keyword id="KW-0234">DNA repair</keyword>
<keyword id="KW-0238">DNA-binding</keyword>
<accession>B5XQ04</accession>
<sequence>MIGRLRGIILEKQPPLVLLETAGVGYEVHMPMTCFYELPEAGQEAIVFTHFVVREDAQLLYGFNNKQERTLFKELIKTNGVGPKLALAILSGMSAQQFVNAVEREEVASLVKLPGIGKKTAERLIVEMKDRFKGLHGDLFTPAADLVLTSPAGPTADDAEQEAVAALVALGYKPQEASRMVSKIARPDANSETLIREALRAAL</sequence>
<name>RUVA_KLEP3</name>